<organism evidence="11">
    <name type="scientific">Anopheles gambiae</name>
    <name type="common">African malaria mosquito</name>
    <dbReference type="NCBI Taxonomy" id="7165"/>
    <lineage>
        <taxon>Eukaryota</taxon>
        <taxon>Metazoa</taxon>
        <taxon>Ecdysozoa</taxon>
        <taxon>Arthropoda</taxon>
        <taxon>Hexapoda</taxon>
        <taxon>Insecta</taxon>
        <taxon>Pterygota</taxon>
        <taxon>Neoptera</taxon>
        <taxon>Endopterygota</taxon>
        <taxon>Diptera</taxon>
        <taxon>Nematocera</taxon>
        <taxon>Culicoidea</taxon>
        <taxon>Culicidae</taxon>
        <taxon>Anophelinae</taxon>
        <taxon>Anopheles</taxon>
    </lineage>
</organism>
<comment type="function">
    <text evidence="7">Serine protease which preferentially cleaves after arginine residues (PubMed:33520733). Involved in the innate immune response against parasite P.bergei infection by activating the melanization cascade (PubMed:33520733). Probably in the hemolymph, cleaves and activates prophenoloxidase (PPO), which functions in the formation of pigments such as melanin and other polyphenolic compounds (PubMed:33520733). In the susceptible strain G3, appears to be dispensable for ookinete elimination which occurs by lysis (PubMed:33520733).</text>
</comment>
<comment type="activity regulation">
    <text evidence="7">Inhibited by serpin SRPN2.</text>
</comment>
<comment type="subunit">
    <text evidence="7">Forms a covalent heterodimer with SRPN2; the interaction inhibits CLIPB10 catalytic activity.</text>
</comment>
<comment type="subcellular location">
    <subcellularLocation>
        <location evidence="6">Secreted</location>
    </subcellularLocation>
</comment>
<comment type="domain">
    <text evidence="5">The clip domain consists of 35-55 residues which are 'knitted' together usually by 3 conserved disulfide bonds forming a clip-like compact structure.</text>
</comment>
<comment type="PTM">
    <text evidence="7">Cleaved by an unknown protease into an active form.</text>
</comment>
<comment type="disruption phenotype">
    <text evidence="7">RNAi-mediated knockdown in the susceptible strain G3 infected with P.berghei does not affect the numbers of live oocysts and melanized ookinetes in the midgut; however, severely reduces ookinete melanization in a CTL4 RNAi-mediated knockdown background (PubMed:33520733). Simultaneous RNAi-mediated knockdown of SRPN2 and CLIPB10 in female, partially reduces the formation of abdominal melanotic tumors caused by SRPN2 RNAi-mediated knockdown (PubMed:33520733).</text>
</comment>
<comment type="similarity">
    <text evidence="6">Belongs to the peptidase S1 family. CLIP subfamily.</text>
</comment>
<evidence type="ECO:0000250" key="1">
    <source>
        <dbReference type="UniProtKB" id="Q9XXV0"/>
    </source>
</evidence>
<evidence type="ECO:0000255" key="2"/>
<evidence type="ECO:0000255" key="3">
    <source>
        <dbReference type="PROSITE-ProRule" id="PRU00274"/>
    </source>
</evidence>
<evidence type="ECO:0000255" key="4">
    <source>
        <dbReference type="PROSITE-ProRule" id="PRU00498"/>
    </source>
</evidence>
<evidence type="ECO:0000255" key="5">
    <source>
        <dbReference type="PROSITE-ProRule" id="PRU01236"/>
    </source>
</evidence>
<evidence type="ECO:0000255" key="6">
    <source>
        <dbReference type="RuleBase" id="RU366078"/>
    </source>
</evidence>
<evidence type="ECO:0000269" key="7">
    <source>
    </source>
</evidence>
<evidence type="ECO:0000303" key="8">
    <source>
    </source>
</evidence>
<evidence type="ECO:0000305" key="9"/>
<evidence type="ECO:0000312" key="10">
    <source>
        <dbReference type="EMBL" id="EAA08418.4"/>
    </source>
</evidence>
<evidence type="ECO:0000312" key="11">
    <source>
        <dbReference type="Proteomes" id="UP000007062"/>
    </source>
</evidence>
<accession>Q7QBP4</accession>
<keyword id="KW-1015">Disulfide bond</keyword>
<keyword id="KW-0325">Glycoprotein</keyword>
<keyword id="KW-0378">Hydrolase</keyword>
<keyword id="KW-0391">Immunity</keyword>
<keyword id="KW-0399">Innate immunity</keyword>
<keyword id="KW-0645">Protease</keyword>
<keyword id="KW-1185">Reference proteome</keyword>
<keyword id="KW-0964">Secreted</keyword>
<keyword id="KW-0720">Serine protease</keyword>
<keyword id="KW-0732">Signal</keyword>
<keyword id="KW-0865">Zymogen</keyword>
<name>CLB10_ANOGA</name>
<gene>
    <name evidence="8" type="primary">CLIPB10</name>
    <name type="synonym">1273735</name>
    <name evidence="10" type="ORF">AgaP_AGAP003058</name>
</gene>
<reference evidence="11" key="1">
    <citation type="journal article" date="2002" name="Science">
        <title>The genome sequence of the malaria mosquito Anopheles gambiae.</title>
        <authorList>
            <person name="Holt R.A."/>
            <person name="Subramanian G.M."/>
            <person name="Halpern A."/>
            <person name="Sutton G.G."/>
            <person name="Charlab R."/>
            <person name="Nusskern D.R."/>
            <person name="Wincker P."/>
            <person name="Clark A.G."/>
            <person name="Ribeiro J.M.C."/>
            <person name="Wides R."/>
            <person name="Salzberg S.L."/>
            <person name="Loftus B.J."/>
            <person name="Yandell M.D."/>
            <person name="Majoros W.H."/>
            <person name="Rusch D.B."/>
            <person name="Lai Z."/>
            <person name="Kraft C.L."/>
            <person name="Abril J.F."/>
            <person name="Anthouard V."/>
            <person name="Arensburger P."/>
            <person name="Atkinson P.W."/>
            <person name="Baden H."/>
            <person name="de Berardinis V."/>
            <person name="Baldwin D."/>
            <person name="Benes V."/>
            <person name="Biedler J."/>
            <person name="Blass C."/>
            <person name="Bolanos R."/>
            <person name="Boscus D."/>
            <person name="Barnstead M."/>
            <person name="Cai S."/>
            <person name="Center A."/>
            <person name="Chaturverdi K."/>
            <person name="Christophides G.K."/>
            <person name="Chrystal M.A.M."/>
            <person name="Clamp M."/>
            <person name="Cravchik A."/>
            <person name="Curwen V."/>
            <person name="Dana A."/>
            <person name="Delcher A."/>
            <person name="Dew I."/>
            <person name="Evans C.A."/>
            <person name="Flanigan M."/>
            <person name="Grundschober-Freimoser A."/>
            <person name="Friedli L."/>
            <person name="Gu Z."/>
            <person name="Guan P."/>
            <person name="Guigo R."/>
            <person name="Hillenmeyer M.E."/>
            <person name="Hladun S.L."/>
            <person name="Hogan J.R."/>
            <person name="Hong Y.S."/>
            <person name="Hoover J."/>
            <person name="Jaillon O."/>
            <person name="Ke Z."/>
            <person name="Kodira C.D."/>
            <person name="Kokoza E."/>
            <person name="Koutsos A."/>
            <person name="Letunic I."/>
            <person name="Levitsky A.A."/>
            <person name="Liang Y."/>
            <person name="Lin J.-J."/>
            <person name="Lobo N.F."/>
            <person name="Lopez J.R."/>
            <person name="Malek J.A."/>
            <person name="McIntosh T.C."/>
            <person name="Meister S."/>
            <person name="Miller J.R."/>
            <person name="Mobarry C."/>
            <person name="Mongin E."/>
            <person name="Murphy S.D."/>
            <person name="O'Brochta D.A."/>
            <person name="Pfannkoch C."/>
            <person name="Qi R."/>
            <person name="Regier M.A."/>
            <person name="Remington K."/>
            <person name="Shao H."/>
            <person name="Sharakhova M.V."/>
            <person name="Sitter C.D."/>
            <person name="Shetty J."/>
            <person name="Smith T.J."/>
            <person name="Strong R."/>
            <person name="Sun J."/>
            <person name="Thomasova D."/>
            <person name="Ton L.Q."/>
            <person name="Topalis P."/>
            <person name="Tu Z.J."/>
            <person name="Unger M.F."/>
            <person name="Walenz B."/>
            <person name="Wang A.H."/>
            <person name="Wang J."/>
            <person name="Wang M."/>
            <person name="Wang X."/>
            <person name="Woodford K.J."/>
            <person name="Wortman J.R."/>
            <person name="Wu M."/>
            <person name="Yao A."/>
            <person name="Zdobnov E.M."/>
            <person name="Zhang H."/>
            <person name="Zhao Q."/>
            <person name="Zhao S."/>
            <person name="Zhu S.C."/>
            <person name="Zhimulev I."/>
            <person name="Coluzzi M."/>
            <person name="della Torre A."/>
            <person name="Roth C.W."/>
            <person name="Louis C."/>
            <person name="Kalush F."/>
            <person name="Mural R.J."/>
            <person name="Myers E.W."/>
            <person name="Adams M.D."/>
            <person name="Smith H.O."/>
            <person name="Broder S."/>
            <person name="Gardner M.J."/>
            <person name="Fraser C.M."/>
            <person name="Birney E."/>
            <person name="Bork P."/>
            <person name="Brey P.T."/>
            <person name="Venter J.C."/>
            <person name="Weissenbach J."/>
            <person name="Kafatos F.C."/>
            <person name="Collins F.H."/>
            <person name="Hoffman S.L."/>
        </authorList>
    </citation>
    <scope>NUCLEOTIDE SEQUENCE [LARGE SCALE GENOMIC DNA]</scope>
    <source>
        <strain evidence="11">PEST</strain>
    </source>
</reference>
<reference evidence="9" key="2">
    <citation type="journal article" date="2020" name="Front. Cell. Infect. Microbiol.">
        <title>CLIPB10 is a Terminal Protease in the Regulatory Network That Controls Melanization in the African Malaria Mosquito Anopheles gambiae.</title>
        <authorList>
            <person name="Zhang X."/>
            <person name="Li M."/>
            <person name="El Moussawi L."/>
            <person name="Saab S."/>
            <person name="Zhang S."/>
            <person name="Osta M.A."/>
            <person name="Michel K."/>
        </authorList>
    </citation>
    <scope>FUNCTION</scope>
    <scope>CATALYTIC ACTIVITY</scope>
    <scope>ACTIVITY REGULATION</scope>
    <scope>INTERACTION WITH SRPN2</scope>
    <scope>PROTEOLYTIC CLEAVAGE</scope>
    <scope>DISRUPTION PHENOTYPE</scope>
    <source>
        <strain evidence="7">G3</strain>
    </source>
</reference>
<protein>
    <recommendedName>
        <fullName evidence="9">CLIP domain-containing serine protease B10</fullName>
        <ecNumber evidence="7">3.4.21.-</ecNumber>
    </recommendedName>
    <component>
        <recommendedName>
            <fullName evidence="9">CLIP domain-containing serine protease B10 light chain</fullName>
        </recommendedName>
    </component>
    <component>
        <recommendedName>
            <fullName evidence="9">CLIP domain-containing serine protease B10 heavy chain</fullName>
        </recommendedName>
    </component>
</protein>
<feature type="signal peptide" evidence="2">
    <location>
        <begin position="1"/>
        <end position="19"/>
    </location>
</feature>
<feature type="chain" id="PRO_5014588334" description="CLIP domain-containing serine protease B10" evidence="2">
    <location>
        <begin position="20"/>
        <end position="362"/>
    </location>
</feature>
<feature type="chain" id="PRO_0000455767" description="CLIP domain-containing serine protease B10 light chain" evidence="1">
    <location>
        <begin position="20"/>
        <end position="109"/>
    </location>
</feature>
<feature type="chain" id="PRO_0000455768" description="CLIP domain-containing serine protease B10 heavy chain" evidence="1">
    <location>
        <begin position="110"/>
        <end position="362"/>
    </location>
</feature>
<feature type="domain" description="Clip" evidence="5">
    <location>
        <begin position="22"/>
        <end position="75"/>
    </location>
</feature>
<feature type="domain" description="Peptidase S1" evidence="3">
    <location>
        <begin position="110"/>
        <end position="361"/>
    </location>
</feature>
<feature type="active site" description="Charge relay system" evidence="3">
    <location>
        <position position="155"/>
    </location>
</feature>
<feature type="active site" description="Charge relay system" evidence="3">
    <location>
        <position position="220"/>
    </location>
</feature>
<feature type="active site" description="Charge relay system" evidence="3">
    <location>
        <position position="314"/>
    </location>
</feature>
<feature type="site" description="Cleavage" evidence="1">
    <location>
        <begin position="109"/>
        <end position="110"/>
    </location>
</feature>
<feature type="glycosylation site" description="N-linked (GlcNAc...) asparagine" evidence="4">
    <location>
        <position position="114"/>
    </location>
</feature>
<feature type="glycosylation site" description="N-linked (GlcNAc...) asparagine" evidence="4">
    <location>
        <position position="254"/>
    </location>
</feature>
<feature type="disulfide bond" evidence="5">
    <location>
        <begin position="23"/>
        <end position="74"/>
    </location>
</feature>
<feature type="disulfide bond" evidence="5">
    <location>
        <begin position="33"/>
        <end position="66"/>
    </location>
</feature>
<feature type="disulfide bond" evidence="5">
    <location>
        <begin position="39"/>
        <end position="75"/>
    </location>
</feature>
<feature type="disulfide bond" evidence="3">
    <location>
        <begin position="140"/>
        <end position="156"/>
    </location>
</feature>
<feature type="disulfide bond" evidence="3">
    <location>
        <begin position="285"/>
        <end position="300"/>
    </location>
</feature>
<feature type="disulfide bond" evidence="3">
    <location>
        <begin position="310"/>
        <end position="337"/>
    </location>
</feature>
<dbReference type="EC" id="3.4.21.-" evidence="7"/>
<dbReference type="EMBL" id="AAAB01008879">
    <property type="protein sequence ID" value="EAA08418.4"/>
    <property type="molecule type" value="Genomic_DNA"/>
</dbReference>
<dbReference type="RefSeq" id="XP_312744.4">
    <property type="nucleotide sequence ID" value="XM_312744.4"/>
</dbReference>
<dbReference type="SMR" id="Q7QBP4"/>
<dbReference type="MEROPS" id="S01.203"/>
<dbReference type="GlyCosmos" id="Q7QBP4">
    <property type="glycosylation" value="2 sites, No reported glycans"/>
</dbReference>
<dbReference type="EnsemblMetazoa" id="AGAP029770-RA">
    <property type="protein sequence ID" value="AGAP029770-PA"/>
    <property type="gene ID" value="AGAP029770"/>
</dbReference>
<dbReference type="GeneID" id="1273735"/>
<dbReference type="KEGG" id="aga:1273735"/>
<dbReference type="VEuPathDB" id="VectorBase:AGAMI1_009020"/>
<dbReference type="VEuPathDB" id="VectorBase:AGAP029770"/>
<dbReference type="HOGENOM" id="CLU_006842_0_3_1"/>
<dbReference type="InParanoid" id="Q7QBP4"/>
<dbReference type="OMA" id="CKRKFAE"/>
<dbReference type="Proteomes" id="UP000007062">
    <property type="component" value="Chromosome 2R"/>
</dbReference>
<dbReference type="GO" id="GO:0005615">
    <property type="term" value="C:extracellular space"/>
    <property type="evidence" value="ECO:0000318"/>
    <property type="project" value="GO_Central"/>
</dbReference>
<dbReference type="GO" id="GO:0004252">
    <property type="term" value="F:serine-type endopeptidase activity"/>
    <property type="evidence" value="ECO:0000314"/>
    <property type="project" value="UniProtKB"/>
</dbReference>
<dbReference type="GO" id="GO:0140546">
    <property type="term" value="P:defense response to symbiont"/>
    <property type="evidence" value="ECO:0000315"/>
    <property type="project" value="UniProtKB"/>
</dbReference>
<dbReference type="GO" id="GO:0045087">
    <property type="term" value="P:innate immune response"/>
    <property type="evidence" value="ECO:0000318"/>
    <property type="project" value="GO_Central"/>
</dbReference>
<dbReference type="GO" id="GO:0035008">
    <property type="term" value="P:positive regulation of melanization defense response"/>
    <property type="evidence" value="ECO:0000315"/>
    <property type="project" value="UniProtKB"/>
</dbReference>
<dbReference type="GO" id="GO:0016485">
    <property type="term" value="P:protein processing"/>
    <property type="evidence" value="ECO:0000314"/>
    <property type="project" value="UniProtKB"/>
</dbReference>
<dbReference type="CDD" id="cd00190">
    <property type="entry name" value="Tryp_SPc"/>
    <property type="match status" value="1"/>
</dbReference>
<dbReference type="FunFam" id="2.40.10.10:FF:000028">
    <property type="entry name" value="Serine protease easter"/>
    <property type="match status" value="1"/>
</dbReference>
<dbReference type="Gene3D" id="3.30.1640.30">
    <property type="match status" value="1"/>
</dbReference>
<dbReference type="Gene3D" id="2.40.10.10">
    <property type="entry name" value="Trypsin-like serine proteases"/>
    <property type="match status" value="2"/>
</dbReference>
<dbReference type="InterPro" id="IPR022700">
    <property type="entry name" value="CLIP"/>
</dbReference>
<dbReference type="InterPro" id="IPR038565">
    <property type="entry name" value="CLIP_sf"/>
</dbReference>
<dbReference type="InterPro" id="IPR009003">
    <property type="entry name" value="Peptidase_S1_PA"/>
</dbReference>
<dbReference type="InterPro" id="IPR043504">
    <property type="entry name" value="Peptidase_S1_PA_chymotrypsin"/>
</dbReference>
<dbReference type="InterPro" id="IPR001314">
    <property type="entry name" value="Peptidase_S1A"/>
</dbReference>
<dbReference type="InterPro" id="IPR051487">
    <property type="entry name" value="Ser/Thr_Proteases_Immune/Dev"/>
</dbReference>
<dbReference type="InterPro" id="IPR001254">
    <property type="entry name" value="Trypsin_dom"/>
</dbReference>
<dbReference type="InterPro" id="IPR018114">
    <property type="entry name" value="TRYPSIN_HIS"/>
</dbReference>
<dbReference type="InterPro" id="IPR033116">
    <property type="entry name" value="TRYPSIN_SER"/>
</dbReference>
<dbReference type="PANTHER" id="PTHR24256">
    <property type="entry name" value="TRYPTASE-RELATED"/>
    <property type="match status" value="1"/>
</dbReference>
<dbReference type="Pfam" id="PF12032">
    <property type="entry name" value="CLIP"/>
    <property type="match status" value="1"/>
</dbReference>
<dbReference type="Pfam" id="PF00089">
    <property type="entry name" value="Trypsin"/>
    <property type="match status" value="1"/>
</dbReference>
<dbReference type="PRINTS" id="PR00722">
    <property type="entry name" value="CHYMOTRYPSIN"/>
</dbReference>
<dbReference type="SMART" id="SM00680">
    <property type="entry name" value="CLIP"/>
    <property type="match status" value="1"/>
</dbReference>
<dbReference type="SMART" id="SM00020">
    <property type="entry name" value="Tryp_SPc"/>
    <property type="match status" value="1"/>
</dbReference>
<dbReference type="SUPFAM" id="SSF50494">
    <property type="entry name" value="Trypsin-like serine proteases"/>
    <property type="match status" value="1"/>
</dbReference>
<dbReference type="PROSITE" id="PS51888">
    <property type="entry name" value="CLIP"/>
    <property type="match status" value="1"/>
</dbReference>
<dbReference type="PROSITE" id="PS50240">
    <property type="entry name" value="TRYPSIN_DOM"/>
    <property type="match status" value="1"/>
</dbReference>
<dbReference type="PROSITE" id="PS00134">
    <property type="entry name" value="TRYPSIN_HIS"/>
    <property type="match status" value="1"/>
</dbReference>
<dbReference type="PROSITE" id="PS00135">
    <property type="entry name" value="TRYPSIN_SER"/>
    <property type="match status" value="1"/>
</dbReference>
<proteinExistence type="evidence at protein level"/>
<sequence>MAKVVDCVLLLAFIAVVRGQEACRTPDHRDGVCHPVQQCPSVRDEFFNSDRVLSEDEIDYLRKLQCKTKDVTICCPDGVTTVDRNPTAVRDGLPNPKAFECGLDTLADRIIGGNYTAIDEFPWYALLEYQSKKGERAFKCGGSLINGRYVLTAAHCLANKKLDEGERLVNVRLGEYNTATDTDCADGNPDDCADPPQNFGIEAQIVHPGYDKNGPYQHHDIALIRLDRDVTMNNFVSPVCLPPDDFPPTSPGLNVTAVGFGHTGRQRHSGIKKKAQFPVFAQEECDKKWKNIEVIGEQLCAGGVFGIDSCSGDSGGPLMVKRFYWIQEGVISFGNQCALEGWPGVYTRVSSYLDWIRQNIRR</sequence>